<feature type="chain" id="PRO_1000073856" description="Argininosuccinate lyase">
    <location>
        <begin position="1"/>
        <end position="458"/>
    </location>
</feature>
<dbReference type="EC" id="4.3.2.1" evidence="1"/>
<dbReference type="EMBL" id="CP000886">
    <property type="protein sequence ID" value="ABX70399.1"/>
    <property type="molecule type" value="Genomic_DNA"/>
</dbReference>
<dbReference type="RefSeq" id="WP_001230054.1">
    <property type="nucleotide sequence ID" value="NC_010102.1"/>
</dbReference>
<dbReference type="SMR" id="A9N0H0"/>
<dbReference type="KEGG" id="spq:SPAB_05108"/>
<dbReference type="PATRIC" id="fig|1016998.12.peg.4794"/>
<dbReference type="HOGENOM" id="CLU_027272_2_3_6"/>
<dbReference type="BioCyc" id="SENT1016998:SPAB_RS20785-MONOMER"/>
<dbReference type="UniPathway" id="UPA00068">
    <property type="reaction ID" value="UER00114"/>
</dbReference>
<dbReference type="Proteomes" id="UP000008556">
    <property type="component" value="Chromosome"/>
</dbReference>
<dbReference type="GO" id="GO:0005829">
    <property type="term" value="C:cytosol"/>
    <property type="evidence" value="ECO:0007669"/>
    <property type="project" value="TreeGrafter"/>
</dbReference>
<dbReference type="GO" id="GO:0004056">
    <property type="term" value="F:argininosuccinate lyase activity"/>
    <property type="evidence" value="ECO:0007669"/>
    <property type="project" value="UniProtKB-UniRule"/>
</dbReference>
<dbReference type="GO" id="GO:0042450">
    <property type="term" value="P:arginine biosynthetic process via ornithine"/>
    <property type="evidence" value="ECO:0007669"/>
    <property type="project" value="InterPro"/>
</dbReference>
<dbReference type="GO" id="GO:0006526">
    <property type="term" value="P:L-arginine biosynthetic process"/>
    <property type="evidence" value="ECO:0007669"/>
    <property type="project" value="UniProtKB-UniRule"/>
</dbReference>
<dbReference type="CDD" id="cd01359">
    <property type="entry name" value="Argininosuccinate_lyase"/>
    <property type="match status" value="1"/>
</dbReference>
<dbReference type="FunFam" id="1.10.275.10:FF:000004">
    <property type="entry name" value="Argininosuccinate lyase"/>
    <property type="match status" value="1"/>
</dbReference>
<dbReference type="FunFam" id="1.10.40.30:FF:000001">
    <property type="entry name" value="Argininosuccinate lyase"/>
    <property type="match status" value="1"/>
</dbReference>
<dbReference type="FunFam" id="1.20.200.10:FF:000006">
    <property type="entry name" value="Argininosuccinate lyase"/>
    <property type="match status" value="1"/>
</dbReference>
<dbReference type="Gene3D" id="1.10.40.30">
    <property type="entry name" value="Fumarase/aspartase (C-terminal domain)"/>
    <property type="match status" value="1"/>
</dbReference>
<dbReference type="Gene3D" id="1.20.200.10">
    <property type="entry name" value="Fumarase/aspartase (Central domain)"/>
    <property type="match status" value="1"/>
</dbReference>
<dbReference type="Gene3D" id="1.10.275.10">
    <property type="entry name" value="Fumarase/aspartase (N-terminal domain)"/>
    <property type="match status" value="1"/>
</dbReference>
<dbReference type="HAMAP" id="MF_00006">
    <property type="entry name" value="Arg_succ_lyase"/>
    <property type="match status" value="1"/>
</dbReference>
<dbReference type="InterPro" id="IPR029419">
    <property type="entry name" value="Arg_succ_lyase_C"/>
</dbReference>
<dbReference type="InterPro" id="IPR009049">
    <property type="entry name" value="Argininosuccinate_lyase"/>
</dbReference>
<dbReference type="InterPro" id="IPR024083">
    <property type="entry name" value="Fumarase/histidase_N"/>
</dbReference>
<dbReference type="InterPro" id="IPR020557">
    <property type="entry name" value="Fumarate_lyase_CS"/>
</dbReference>
<dbReference type="InterPro" id="IPR000362">
    <property type="entry name" value="Fumarate_lyase_fam"/>
</dbReference>
<dbReference type="InterPro" id="IPR022761">
    <property type="entry name" value="Fumarate_lyase_N"/>
</dbReference>
<dbReference type="InterPro" id="IPR008948">
    <property type="entry name" value="L-Aspartase-like"/>
</dbReference>
<dbReference type="NCBIfam" id="TIGR00838">
    <property type="entry name" value="argH"/>
    <property type="match status" value="1"/>
</dbReference>
<dbReference type="NCBIfam" id="NF008964">
    <property type="entry name" value="PRK12308.1"/>
    <property type="match status" value="1"/>
</dbReference>
<dbReference type="PANTHER" id="PTHR43814">
    <property type="entry name" value="ARGININOSUCCINATE LYASE"/>
    <property type="match status" value="1"/>
</dbReference>
<dbReference type="PANTHER" id="PTHR43814:SF1">
    <property type="entry name" value="ARGININOSUCCINATE LYASE"/>
    <property type="match status" value="1"/>
</dbReference>
<dbReference type="Pfam" id="PF14698">
    <property type="entry name" value="ASL_C2"/>
    <property type="match status" value="1"/>
</dbReference>
<dbReference type="Pfam" id="PF00206">
    <property type="entry name" value="Lyase_1"/>
    <property type="match status" value="1"/>
</dbReference>
<dbReference type="PRINTS" id="PR00145">
    <property type="entry name" value="ARGSUCLYASE"/>
</dbReference>
<dbReference type="PRINTS" id="PR00149">
    <property type="entry name" value="FUMRATELYASE"/>
</dbReference>
<dbReference type="SUPFAM" id="SSF48557">
    <property type="entry name" value="L-aspartase-like"/>
    <property type="match status" value="1"/>
</dbReference>
<dbReference type="PROSITE" id="PS00163">
    <property type="entry name" value="FUMARATE_LYASES"/>
    <property type="match status" value="1"/>
</dbReference>
<organism>
    <name type="scientific">Salmonella paratyphi B (strain ATCC BAA-1250 / SPB7)</name>
    <dbReference type="NCBI Taxonomy" id="1016998"/>
    <lineage>
        <taxon>Bacteria</taxon>
        <taxon>Pseudomonadati</taxon>
        <taxon>Pseudomonadota</taxon>
        <taxon>Gammaproteobacteria</taxon>
        <taxon>Enterobacterales</taxon>
        <taxon>Enterobacteriaceae</taxon>
        <taxon>Salmonella</taxon>
    </lineage>
</organism>
<keyword id="KW-0028">Amino-acid biosynthesis</keyword>
<keyword id="KW-0055">Arginine biosynthesis</keyword>
<keyword id="KW-0963">Cytoplasm</keyword>
<keyword id="KW-0456">Lyase</keyword>
<sequence length="458" mass="50526">MALWGGRFTQAADQRFKQFNDSLRFDYRLAEQDIVGSVAWSKALVTVGVLTADEQRQLEEALNVLLEEVRANPQQILQSDAEDIHSWVEGKLIDKVGQLGKKLHTGRSRNDQVATDLKLWCKETVRELLTANRQLQSALVETAQANQDAVMPGYTHLQRAQPVTFAHWCLAYVEMLARDESRLQDTLKRLDVSPLGCGALAGTAYEIDREQLAGWLGFTSATRNSLDSVSDRDHVLELLSDAAIGMVHLSRFAEDLIFFNSGEAGFVELSDRVTSGSSLMPQKKNPDALELIRGKCGRVQGALTGMMMTLKGLPLAYNKDMQEDKEGLFDALDTWLDCLHMAALVLDGIQVKRPRCQDAAQQGYANATELADYLVAKGVPFREAHHIVGEAVVEAIRQGKPLEALPLADLQKFSRVIGDDVYPILSLQSCLDKRAAKGGVSPQQVAQAIDDARARLAL</sequence>
<evidence type="ECO:0000255" key="1">
    <source>
        <dbReference type="HAMAP-Rule" id="MF_00006"/>
    </source>
</evidence>
<comment type="catalytic activity">
    <reaction evidence="1">
        <text>2-(N(omega)-L-arginino)succinate = fumarate + L-arginine</text>
        <dbReference type="Rhea" id="RHEA:24020"/>
        <dbReference type="ChEBI" id="CHEBI:29806"/>
        <dbReference type="ChEBI" id="CHEBI:32682"/>
        <dbReference type="ChEBI" id="CHEBI:57472"/>
        <dbReference type="EC" id="4.3.2.1"/>
    </reaction>
</comment>
<comment type="pathway">
    <text evidence="1">Amino-acid biosynthesis; L-arginine biosynthesis; L-arginine from L-ornithine and carbamoyl phosphate: step 3/3.</text>
</comment>
<comment type="subcellular location">
    <subcellularLocation>
        <location evidence="1">Cytoplasm</location>
    </subcellularLocation>
</comment>
<comment type="similarity">
    <text evidence="1">Belongs to the lyase 1 family. Argininosuccinate lyase subfamily.</text>
</comment>
<proteinExistence type="inferred from homology"/>
<name>ARLY_SALPB</name>
<reference key="1">
    <citation type="submission" date="2007-11" db="EMBL/GenBank/DDBJ databases">
        <authorList>
            <consortium name="The Salmonella enterica serovar Paratyphi B Genome Sequencing Project"/>
            <person name="McClelland M."/>
            <person name="Sanderson E.K."/>
            <person name="Porwollik S."/>
            <person name="Spieth J."/>
            <person name="Clifton W.S."/>
            <person name="Fulton R."/>
            <person name="Cordes M."/>
            <person name="Wollam A."/>
            <person name="Shah N."/>
            <person name="Pepin K."/>
            <person name="Bhonagiri V."/>
            <person name="Nash W."/>
            <person name="Johnson M."/>
            <person name="Thiruvilangam P."/>
            <person name="Wilson R."/>
        </authorList>
    </citation>
    <scope>NUCLEOTIDE SEQUENCE [LARGE SCALE GENOMIC DNA]</scope>
    <source>
        <strain>ATCC BAA-1250 / SPB7</strain>
    </source>
</reference>
<accession>A9N0H0</accession>
<protein>
    <recommendedName>
        <fullName evidence="1">Argininosuccinate lyase</fullName>
        <shortName evidence="1">ASAL</shortName>
        <ecNumber evidence="1">4.3.2.1</ecNumber>
    </recommendedName>
    <alternativeName>
        <fullName evidence="1">Arginosuccinase</fullName>
    </alternativeName>
</protein>
<gene>
    <name evidence="1" type="primary">argH</name>
    <name type="ordered locus">SPAB_05108</name>
</gene>